<feature type="chain" id="PRO_0000080336" description="Cyclin-A1">
    <location>
        <begin position="1"/>
        <end position="391"/>
    </location>
</feature>
<protein>
    <recommendedName>
        <fullName>Cyclin-A1</fullName>
        <shortName>Cyclin-A</shortName>
    </recommendedName>
</protein>
<name>CCNA1_CARAU</name>
<comment type="function">
    <text evidence="2">May be involved in the control of the cell cycle at the G1/S (start) and G2/M (mitosis) transitions.</text>
</comment>
<comment type="subunit">
    <text evidence="2">Interacts with the CDK1 and the CDK2 protein kinases to form a serine/threonine kinase holoenzyme complex. The cyclin subunit imparts substrate specificity to the complex.</text>
</comment>
<comment type="subcellular location">
    <subcellularLocation>
        <location evidence="1">Nucleus</location>
    </subcellularLocation>
</comment>
<comment type="similarity">
    <text evidence="3">Belongs to the cyclin family. Cyclin AB subfamily.</text>
</comment>
<sequence>MASRGFAPLSGRQENIMVLGRADGLHALKPGQRVVLGVLTENDQHNRVFGQVSSKYVPALRDASTLDVSTSSATLGVHVVEPVIAQATKPTSFLLPSELLLVDDVVQDLGSGSCMDSSMQSLPEEAAYEDILCVPEYAEDIHRYLRECEVKYRPKPGYMRKQPDITNCMRVILVDWLVEVGEEYKLCSETLFLAVNYLDRFLSCMSVLRGKLQLVGTAAVLLAAKYEEVYPPEVDEFVYITDDTYTKKQLLRMEQHLLRVLAFDMTAPTVHQFLMQYTLEGHICARTVNLALYLSELSLLEVDPFVQYLPSKTAAAAYCLANYTLNGVLWPENLYAFTGYSLAVIIPCLMELHKLHLGAAGRPQQAIQEKYKGSKYCGVSLLEPVESLPLP</sequence>
<reference key="1">
    <citation type="journal article" date="1995" name="Dev. Biol.">
        <title>Molecular cloning and immunological analysis of goldfish cyclin A during oocyte maturation.</title>
        <authorList>
            <person name="Katsu Y."/>
            <person name="Yamashita M."/>
            <person name="Hirai T."/>
            <person name="Tokumoto T."/>
            <person name="Kajiura H."/>
            <person name="Nagahama Y."/>
        </authorList>
    </citation>
    <scope>NUCLEOTIDE SEQUENCE [MRNA]</scope>
    <source>
        <tissue>Ovary</tissue>
    </source>
</reference>
<gene>
    <name type="primary">ccna1</name>
    <name type="synonym">ccna</name>
</gene>
<proteinExistence type="evidence at transcript level"/>
<dbReference type="EMBL" id="S79215">
    <property type="protein sequence ID" value="AAB35103.1"/>
    <property type="molecule type" value="mRNA"/>
</dbReference>
<dbReference type="RefSeq" id="XP_026129819.1">
    <property type="nucleotide sequence ID" value="XM_026274034.1"/>
</dbReference>
<dbReference type="RefSeq" id="XP_026129820.1">
    <property type="nucleotide sequence ID" value="XM_026274035.1"/>
</dbReference>
<dbReference type="SMR" id="Q92161"/>
<dbReference type="GeneID" id="113110038"/>
<dbReference type="OrthoDB" id="5590282at2759"/>
<dbReference type="Proteomes" id="UP000515129">
    <property type="component" value="Chromosome 10"/>
</dbReference>
<dbReference type="GO" id="GO:0005634">
    <property type="term" value="C:nucleus"/>
    <property type="evidence" value="ECO:0007669"/>
    <property type="project" value="UniProtKB-SubCell"/>
</dbReference>
<dbReference type="GO" id="GO:0051301">
    <property type="term" value="P:cell division"/>
    <property type="evidence" value="ECO:0007669"/>
    <property type="project" value="UniProtKB-KW"/>
</dbReference>
<dbReference type="CDD" id="cd20560">
    <property type="entry name" value="CYCLIN_CCNA1_rpt1"/>
    <property type="match status" value="1"/>
</dbReference>
<dbReference type="FunFam" id="1.10.472.10:FF:000001">
    <property type="entry name" value="G2/mitotic-specific cyclin"/>
    <property type="match status" value="1"/>
</dbReference>
<dbReference type="Gene3D" id="1.10.472.10">
    <property type="entry name" value="Cyclin-like"/>
    <property type="match status" value="2"/>
</dbReference>
<dbReference type="InterPro" id="IPR039361">
    <property type="entry name" value="Cyclin"/>
</dbReference>
<dbReference type="InterPro" id="IPR013763">
    <property type="entry name" value="Cyclin-like_dom"/>
</dbReference>
<dbReference type="InterPro" id="IPR036915">
    <property type="entry name" value="Cyclin-like_sf"/>
</dbReference>
<dbReference type="InterPro" id="IPR004367">
    <property type="entry name" value="Cyclin_C-dom"/>
</dbReference>
<dbReference type="InterPro" id="IPR006671">
    <property type="entry name" value="Cyclin_N"/>
</dbReference>
<dbReference type="InterPro" id="IPR048258">
    <property type="entry name" value="Cyclins_cyclin-box"/>
</dbReference>
<dbReference type="PANTHER" id="PTHR10177">
    <property type="entry name" value="CYCLINS"/>
    <property type="match status" value="1"/>
</dbReference>
<dbReference type="Pfam" id="PF02984">
    <property type="entry name" value="Cyclin_C"/>
    <property type="match status" value="1"/>
</dbReference>
<dbReference type="Pfam" id="PF00134">
    <property type="entry name" value="Cyclin_N"/>
    <property type="match status" value="1"/>
</dbReference>
<dbReference type="SMART" id="SM00385">
    <property type="entry name" value="CYCLIN"/>
    <property type="match status" value="2"/>
</dbReference>
<dbReference type="SMART" id="SM01332">
    <property type="entry name" value="Cyclin_C"/>
    <property type="match status" value="1"/>
</dbReference>
<dbReference type="SUPFAM" id="SSF47954">
    <property type="entry name" value="Cyclin-like"/>
    <property type="match status" value="2"/>
</dbReference>
<dbReference type="PROSITE" id="PS00292">
    <property type="entry name" value="CYCLINS"/>
    <property type="match status" value="1"/>
</dbReference>
<accession>Q92161</accession>
<evidence type="ECO:0000250" key="1">
    <source>
        <dbReference type="UniProtKB" id="P20248"/>
    </source>
</evidence>
<evidence type="ECO:0000250" key="2">
    <source>
        <dbReference type="UniProtKB" id="P78396"/>
    </source>
</evidence>
<evidence type="ECO:0000305" key="3"/>
<organism>
    <name type="scientific">Carassius auratus</name>
    <name type="common">Goldfish</name>
    <dbReference type="NCBI Taxonomy" id="7957"/>
    <lineage>
        <taxon>Eukaryota</taxon>
        <taxon>Metazoa</taxon>
        <taxon>Chordata</taxon>
        <taxon>Craniata</taxon>
        <taxon>Vertebrata</taxon>
        <taxon>Euteleostomi</taxon>
        <taxon>Actinopterygii</taxon>
        <taxon>Neopterygii</taxon>
        <taxon>Teleostei</taxon>
        <taxon>Ostariophysi</taxon>
        <taxon>Cypriniformes</taxon>
        <taxon>Cyprinidae</taxon>
        <taxon>Cyprininae</taxon>
        <taxon>Carassius</taxon>
    </lineage>
</organism>
<keyword id="KW-0131">Cell cycle</keyword>
<keyword id="KW-0132">Cell division</keyword>
<keyword id="KW-0195">Cyclin</keyword>
<keyword id="KW-0498">Mitosis</keyword>
<keyword id="KW-0539">Nucleus</keyword>
<keyword id="KW-1185">Reference proteome</keyword>